<name>BRI3_MOUSE</name>
<accession>P28662</accession>
<accession>Q501N3</accession>
<accession>Q9Z1S1</accession>
<dbReference type="EMBL" id="AF106967">
    <property type="protein sequence ID" value="AAD05168.1"/>
    <property type="molecule type" value="mRNA"/>
</dbReference>
<dbReference type="EMBL" id="BC095955">
    <property type="protein sequence ID" value="AAH95955.1"/>
    <property type="molecule type" value="mRNA"/>
</dbReference>
<dbReference type="EMBL" id="X61454">
    <property type="protein sequence ID" value="CAA43694.1"/>
    <property type="molecule type" value="mRNA"/>
</dbReference>
<dbReference type="CCDS" id="CCDS19848.1"/>
<dbReference type="PIR" id="S16868">
    <property type="entry name" value="S16868"/>
</dbReference>
<dbReference type="RefSeq" id="NP_061242.3">
    <property type="nucleotide sequence ID" value="NM_018772.5"/>
</dbReference>
<dbReference type="FunCoup" id="P28662">
    <property type="interactions" value="246"/>
</dbReference>
<dbReference type="STRING" id="10090.ENSMUSP00000057263"/>
<dbReference type="PhosphoSitePlus" id="P28662"/>
<dbReference type="SwissPalm" id="P28662"/>
<dbReference type="PaxDb" id="10090-ENSMUSP00000057263"/>
<dbReference type="ProteomicsDB" id="273765"/>
<dbReference type="Antibodypedia" id="49158">
    <property type="antibodies" value="51 antibodies from 19 providers"/>
</dbReference>
<dbReference type="DNASU" id="55950"/>
<dbReference type="Ensembl" id="ENSMUST00000056578.7">
    <property type="protein sequence ID" value="ENSMUSP00000057263.7"/>
    <property type="gene ID" value="ENSMUSG00000047843.17"/>
</dbReference>
<dbReference type="GeneID" id="55950"/>
<dbReference type="KEGG" id="mmu:55950"/>
<dbReference type="UCSC" id="uc009alo.2">
    <property type="organism name" value="mouse"/>
</dbReference>
<dbReference type="AGR" id="MGI:1933174"/>
<dbReference type="CTD" id="25798"/>
<dbReference type="MGI" id="MGI:1933174">
    <property type="gene designation" value="Bri3"/>
</dbReference>
<dbReference type="VEuPathDB" id="HostDB:ENSMUSG00000047843"/>
<dbReference type="eggNOG" id="KOG4517">
    <property type="taxonomic scope" value="Eukaryota"/>
</dbReference>
<dbReference type="GeneTree" id="ENSGT00510000048486"/>
<dbReference type="HOGENOM" id="CLU_138141_0_0_1"/>
<dbReference type="InParanoid" id="P28662"/>
<dbReference type="OMA" id="YEYGPQQ"/>
<dbReference type="OrthoDB" id="2564984at2759"/>
<dbReference type="PhylomeDB" id="P28662"/>
<dbReference type="TreeFam" id="TF329242"/>
<dbReference type="Reactome" id="R-MMU-6798695">
    <property type="pathway name" value="Neutrophil degranulation"/>
</dbReference>
<dbReference type="BioGRID-ORCS" id="55950">
    <property type="hits" value="5 hits in 78 CRISPR screens"/>
</dbReference>
<dbReference type="ChiTaRS" id="Bri3">
    <property type="organism name" value="mouse"/>
</dbReference>
<dbReference type="PRO" id="PR:P28662"/>
<dbReference type="Proteomes" id="UP000000589">
    <property type="component" value="Chromosome 5"/>
</dbReference>
<dbReference type="RNAct" id="P28662">
    <property type="molecule type" value="protein"/>
</dbReference>
<dbReference type="Bgee" id="ENSMUSG00000047843">
    <property type="expression patterns" value="Expressed in animal zygote and 70 other cell types or tissues"/>
</dbReference>
<dbReference type="ExpressionAtlas" id="P28662">
    <property type="expression patterns" value="baseline and differential"/>
</dbReference>
<dbReference type="GO" id="GO:0005765">
    <property type="term" value="C:lysosomal membrane"/>
    <property type="evidence" value="ECO:0007669"/>
    <property type="project" value="UniProtKB-SubCell"/>
</dbReference>
<dbReference type="GO" id="GO:0048471">
    <property type="term" value="C:perinuclear region of cytoplasm"/>
    <property type="evidence" value="ECO:0007669"/>
    <property type="project" value="UniProtKB-SubCell"/>
</dbReference>
<dbReference type="GO" id="GO:0042802">
    <property type="term" value="F:identical protein binding"/>
    <property type="evidence" value="ECO:0000266"/>
    <property type="project" value="MGI"/>
</dbReference>
<dbReference type="InterPro" id="IPR019317">
    <property type="entry name" value="BRI3"/>
</dbReference>
<dbReference type="PANTHER" id="PTHR13551">
    <property type="entry name" value="BRAIN PROTEIN I3"/>
    <property type="match status" value="1"/>
</dbReference>
<dbReference type="PANTHER" id="PTHR13551:SF1">
    <property type="entry name" value="MEMBRANE PROTEIN BRI3"/>
    <property type="match status" value="1"/>
</dbReference>
<dbReference type="Pfam" id="PF10164">
    <property type="entry name" value="BRI3"/>
    <property type="match status" value="1"/>
</dbReference>
<proteinExistence type="evidence at transcript level"/>
<protein>
    <recommendedName>
        <fullName evidence="4">Membrane protein BRI3</fullName>
    </recommendedName>
    <alternativeName>
        <fullName evidence="4">Brain protein I3</fullName>
    </alternativeName>
</protein>
<keyword id="KW-0963">Cytoplasm</keyword>
<keyword id="KW-0458">Lysosome</keyword>
<keyword id="KW-0472">Membrane</keyword>
<keyword id="KW-1185">Reference proteome</keyword>
<keyword id="KW-0812">Transmembrane</keyword>
<keyword id="KW-1133">Transmembrane helix</keyword>
<gene>
    <name type="primary">Bri3</name>
</gene>
<organism>
    <name type="scientific">Mus musculus</name>
    <name type="common">Mouse</name>
    <dbReference type="NCBI Taxonomy" id="10090"/>
    <lineage>
        <taxon>Eukaryota</taxon>
        <taxon>Metazoa</taxon>
        <taxon>Chordata</taxon>
        <taxon>Craniata</taxon>
        <taxon>Vertebrata</taxon>
        <taxon>Euteleostomi</taxon>
        <taxon>Mammalia</taxon>
        <taxon>Eutheria</taxon>
        <taxon>Euarchontoglires</taxon>
        <taxon>Glires</taxon>
        <taxon>Rodentia</taxon>
        <taxon>Myomorpha</taxon>
        <taxon>Muroidea</taxon>
        <taxon>Muridae</taxon>
        <taxon>Murinae</taxon>
        <taxon>Mus</taxon>
        <taxon>Mus</taxon>
    </lineage>
</organism>
<comment type="function">
    <text evidence="1 3">Participates in tumor necrosis factor-alpha (TNF)-induced cell death (Ref.4). May be a target of Wnt/beta-catenin signaling in the liver (By similarity).</text>
</comment>
<comment type="subunit">
    <text evidence="1">Interacts with BRI3BP. Interacts with MGAT1 and IFITM3 (By similarity).</text>
</comment>
<comment type="subcellular location">
    <subcellularLocation>
        <location evidence="1">Lysosome membrane</location>
        <topology evidence="2">Multi-pass membrane protein</topology>
    </subcellularLocation>
    <subcellularLocation>
        <location evidence="1">Cytoplasm</location>
        <location evidence="1">Perinuclear region</location>
    </subcellularLocation>
    <text evidence="1">Co-localizes with MGAT1 and IFITM3 at the perinuclear region.</text>
</comment>
<comment type="tissue specificity">
    <text>High expression in cerebral cortex, and in cerebellar cortex.</text>
</comment>
<comment type="induction">
    <text evidence="3">Up-regulated during TNF-mediated inflammation and immunity.</text>
</comment>
<comment type="similarity">
    <text evidence="4">Belongs to the BRI3 family.</text>
</comment>
<sequence>MDHKPLLQERPPAYNLEAGQGDYACGPHGYGAIPTAPPPPPYPYLVTGIPTSHPRVYNIHSRTVTRYPANSIVVVGGCPVCRVGVLEYCFTCLGIFLAIVLFPFGFLCCFALRKRRCPNCGAVFT</sequence>
<feature type="chain" id="PRO_0000064924" description="Membrane protein BRI3">
    <location>
        <begin position="1"/>
        <end position="125"/>
    </location>
</feature>
<feature type="transmembrane region" description="Helical" evidence="2">
    <location>
        <begin position="71"/>
        <end position="91"/>
    </location>
</feature>
<feature type="transmembrane region" description="Helical" evidence="2">
    <location>
        <begin position="92"/>
        <end position="112"/>
    </location>
</feature>
<feature type="sequence conflict" description="In Ref. 3; CAA43694." evidence="4" ref="3">
    <original>NCGAVFT</original>
    <variation>TVERSLLRGNSTPSFP</variation>
    <location>
        <begin position="119"/>
        <end position="125"/>
    </location>
</feature>
<reference key="1">
    <citation type="submission" date="1998-11" db="EMBL/GenBank/DDBJ databases">
        <title>The gene encoding the chick orthologue of mouse brain protein I3 is expressed in the inner ear.</title>
        <authorList>
            <person name="Adler H.J."/>
            <person name="Warner S.J."/>
            <person name="Rossi A.M."/>
            <person name="Lomax M.I."/>
        </authorList>
    </citation>
    <scope>NUCLEOTIDE SEQUENCE [MRNA]</scope>
    <source>
        <tissue>Brain</tissue>
    </source>
</reference>
<reference key="2">
    <citation type="journal article" date="2004" name="Genome Res.">
        <title>The status, quality, and expansion of the NIH full-length cDNA project: the Mammalian Gene Collection (MGC).</title>
        <authorList>
            <consortium name="The MGC Project Team"/>
        </authorList>
    </citation>
    <scope>NUCLEOTIDE SEQUENCE [LARGE SCALE MRNA]</scope>
    <source>
        <strain>NMRI</strain>
        <tissue>Mammary tumor</tissue>
    </source>
</reference>
<reference key="3">
    <citation type="journal article" date="1990" name="Eur. J. Neurosci.">
        <title>A collection of cDNA clones with specific expression patterns in mouse brain.</title>
        <authorList>
            <person name="Kato K."/>
        </authorList>
    </citation>
    <scope>NUCLEOTIDE SEQUENCE [LARGE SCALE MRNA] OF 67-125</scope>
    <source>
        <strain>BALB/cJ</strain>
        <tissue>Brain</tissue>
    </source>
</reference>
<reference key="4">
    <citation type="journal article" date="2002" name="Chin. Sci. Bull.">
        <title>Cloning of murine BRI3 gene and study on its function for inducing cell death.</title>
        <authorList>
            <person name="Lin L."/>
            <person name="Yu H."/>
            <person name="Ying M."/>
            <person name="Tang J."/>
            <person name="Zhou W."/>
            <person name="Zhao S."/>
            <person name="Li C."/>
        </authorList>
    </citation>
    <scope>FUNCTION</scope>
    <scope>INDUCTION</scope>
</reference>
<evidence type="ECO:0000250" key="1">
    <source>
        <dbReference type="UniProtKB" id="O95415"/>
    </source>
</evidence>
<evidence type="ECO:0000255" key="2"/>
<evidence type="ECO:0000269" key="3">
    <source ref="4"/>
</evidence>
<evidence type="ECO:0000305" key="4"/>